<comment type="function">
    <text evidence="1">Component of the signaling pathway of IL-1 and Toll-like receptors. Inhibits cell activation by microbial products. Connects the ubiquitin pathway to autophagy by functioning as a ubiquitin-ATG8 family adapter and thus mediating autophagic clearance of ubiquitin conjugates. The TOLLIP-dependent selective autophagy pathway plays an important role in clearance of cytotoxic polyQ proteins aggregates (By similarity). In a complex with TOM1, recruits ubiquitin-conjugated proteins onto early endosomes (By similarity). Binds to phosphatidylinositol 3-phosphate (PtdIns(3)P) (By similarity).</text>
</comment>
<comment type="subunit">
    <text evidence="1">Interacts with ATG8 family proteins (via AIM motifs), and ubiquitin (via CUE domain). Found in a complex with TOM1; interacts (via N-terminus) with TOM1 (via GAT domain); the interactions leads to TOM1-recruitment to endosomes and inhibition of TOLLIP binding to PtdIns(3)P (By similarity).</text>
</comment>
<comment type="subcellular location">
    <subcellularLocation>
        <location evidence="1">Cytoplasm</location>
    </subcellularLocation>
    <subcellularLocation>
        <location evidence="1">Endosome</location>
    </subcellularLocation>
    <subcellularLocation>
        <location evidence="1">Early endosome</location>
    </subcellularLocation>
    <text evidence="1">Localized to endo/exosomal vesicles.</text>
</comment>
<comment type="domain">
    <text evidence="1">Both ATG8-interaction motifs (AIM1 and AIM2) are required for the association with ATG8 family proteins.</text>
</comment>
<comment type="domain">
    <text evidence="1">The N-terminal TOM1-binding domain (residues 1-53) is a disordered domain that partially folds when bound to the GAT domain of TOM1.</text>
</comment>
<comment type="similarity">
    <text evidence="4">Belongs to the tollip family.</text>
</comment>
<evidence type="ECO:0000250" key="1">
    <source>
        <dbReference type="UniProtKB" id="Q9H0E2"/>
    </source>
</evidence>
<evidence type="ECO:0000255" key="2">
    <source>
        <dbReference type="PROSITE-ProRule" id="PRU00041"/>
    </source>
</evidence>
<evidence type="ECO:0000255" key="3">
    <source>
        <dbReference type="PROSITE-ProRule" id="PRU00468"/>
    </source>
</evidence>
<evidence type="ECO:0000305" key="4"/>
<feature type="chain" id="PRO_0000384932" description="Toll-interacting protein">
    <location>
        <begin position="1"/>
        <end position="274"/>
    </location>
</feature>
<feature type="domain" description="C2" evidence="2">
    <location>
        <begin position="35"/>
        <end position="152"/>
    </location>
</feature>
<feature type="domain" description="CUE" evidence="3">
    <location>
        <begin position="229"/>
        <end position="272"/>
    </location>
</feature>
<feature type="short sequence motif" description="AIM1">
    <location>
        <begin position="133"/>
        <end position="136"/>
    </location>
</feature>
<feature type="short sequence motif" description="AIM2">
    <location>
        <begin position="151"/>
        <end position="154"/>
    </location>
</feature>
<organism>
    <name type="scientific">Gallus gallus</name>
    <name type="common">Chicken</name>
    <dbReference type="NCBI Taxonomy" id="9031"/>
    <lineage>
        <taxon>Eukaryota</taxon>
        <taxon>Metazoa</taxon>
        <taxon>Chordata</taxon>
        <taxon>Craniata</taxon>
        <taxon>Vertebrata</taxon>
        <taxon>Euteleostomi</taxon>
        <taxon>Archelosauria</taxon>
        <taxon>Archosauria</taxon>
        <taxon>Dinosauria</taxon>
        <taxon>Saurischia</taxon>
        <taxon>Theropoda</taxon>
        <taxon>Coelurosauria</taxon>
        <taxon>Aves</taxon>
        <taxon>Neognathae</taxon>
        <taxon>Galloanserae</taxon>
        <taxon>Galliformes</taxon>
        <taxon>Phasianidae</taxon>
        <taxon>Phasianinae</taxon>
        <taxon>Gallus</taxon>
    </lineage>
</organism>
<proteinExistence type="evidence at transcript level"/>
<gene>
    <name type="primary">TOLLIP</name>
    <name type="ORF">RCJMB04_14a3</name>
</gene>
<dbReference type="EMBL" id="AJ720279">
    <property type="protein sequence ID" value="CAG31938.1"/>
    <property type="molecule type" value="mRNA"/>
</dbReference>
<dbReference type="RefSeq" id="NP_001006471.1">
    <property type="nucleotide sequence ID" value="NM_001006471.1"/>
</dbReference>
<dbReference type="SMR" id="Q5ZK05"/>
<dbReference type="FunCoup" id="Q5ZK05">
    <property type="interactions" value="1219"/>
</dbReference>
<dbReference type="STRING" id="9031.ENSGALP00000010809"/>
<dbReference type="PaxDb" id="9031-ENSGALP00000010809"/>
<dbReference type="GeneID" id="423099"/>
<dbReference type="KEGG" id="gga:423099"/>
<dbReference type="CTD" id="54472"/>
<dbReference type="VEuPathDB" id="HostDB:geneid_423099"/>
<dbReference type="eggNOG" id="ENOG502QWQA">
    <property type="taxonomic scope" value="Eukaryota"/>
</dbReference>
<dbReference type="InParanoid" id="Q5ZK05"/>
<dbReference type="OrthoDB" id="9942608at2759"/>
<dbReference type="PhylomeDB" id="Q5ZK05"/>
<dbReference type="PRO" id="PR:Q5ZK05"/>
<dbReference type="Proteomes" id="UP000000539">
    <property type="component" value="Unassembled WGS sequence"/>
</dbReference>
<dbReference type="GO" id="GO:0005737">
    <property type="term" value="C:cytoplasm"/>
    <property type="evidence" value="ECO:0000318"/>
    <property type="project" value="GO_Central"/>
</dbReference>
<dbReference type="GO" id="GO:0005769">
    <property type="term" value="C:early endosome"/>
    <property type="evidence" value="ECO:0007669"/>
    <property type="project" value="UniProtKB-SubCell"/>
</dbReference>
<dbReference type="GO" id="GO:0070062">
    <property type="term" value="C:extracellular exosome"/>
    <property type="evidence" value="ECO:0000247"/>
    <property type="project" value="AgBase"/>
</dbReference>
<dbReference type="GO" id="GO:0019900">
    <property type="term" value="F:kinase binding"/>
    <property type="evidence" value="ECO:0000247"/>
    <property type="project" value="AgBase"/>
</dbReference>
<dbReference type="GO" id="GO:0035325">
    <property type="term" value="F:Toll-like receptor binding"/>
    <property type="evidence" value="ECO:0000247"/>
    <property type="project" value="AgBase"/>
</dbReference>
<dbReference type="GO" id="GO:0043130">
    <property type="term" value="F:ubiquitin binding"/>
    <property type="evidence" value="ECO:0000318"/>
    <property type="project" value="GO_Central"/>
</dbReference>
<dbReference type="GO" id="GO:0031624">
    <property type="term" value="F:ubiquitin conjugating enzyme binding"/>
    <property type="evidence" value="ECO:0000318"/>
    <property type="project" value="GO_Central"/>
</dbReference>
<dbReference type="GO" id="GO:0006914">
    <property type="term" value="P:autophagy"/>
    <property type="evidence" value="ECO:0007669"/>
    <property type="project" value="UniProtKB-KW"/>
</dbReference>
<dbReference type="GO" id="GO:0030855">
    <property type="term" value="P:epithelial cell differentiation"/>
    <property type="evidence" value="ECO:0000247"/>
    <property type="project" value="AgBase"/>
</dbReference>
<dbReference type="GO" id="GO:0006954">
    <property type="term" value="P:inflammatory response"/>
    <property type="evidence" value="ECO:0007669"/>
    <property type="project" value="UniProtKB-KW"/>
</dbReference>
<dbReference type="GO" id="GO:0045087">
    <property type="term" value="P:innate immune response"/>
    <property type="evidence" value="ECO:0007669"/>
    <property type="project" value="UniProtKB-KW"/>
</dbReference>
<dbReference type="GO" id="GO:0016310">
    <property type="term" value="P:phosphorylation"/>
    <property type="evidence" value="ECO:0000250"/>
    <property type="project" value="UniProtKB"/>
</dbReference>
<dbReference type="GO" id="GO:0036010">
    <property type="term" value="P:protein localization to endosome"/>
    <property type="evidence" value="ECO:0000247"/>
    <property type="project" value="AgBase"/>
</dbReference>
<dbReference type="GO" id="GO:0007165">
    <property type="term" value="P:signal transduction"/>
    <property type="evidence" value="ECO:0000247"/>
    <property type="project" value="AgBase"/>
</dbReference>
<dbReference type="GO" id="GO:0006511">
    <property type="term" value="P:ubiquitin-dependent protein catabolic process"/>
    <property type="evidence" value="ECO:0000318"/>
    <property type="project" value="GO_Central"/>
</dbReference>
<dbReference type="CDD" id="cd04016">
    <property type="entry name" value="C2_Tollip"/>
    <property type="match status" value="1"/>
</dbReference>
<dbReference type="CDD" id="cd14363">
    <property type="entry name" value="CUE_TOLIP"/>
    <property type="match status" value="1"/>
</dbReference>
<dbReference type="FunFam" id="1.10.8.10:FF:000036">
    <property type="entry name" value="Toll-interacting protein-like Protein"/>
    <property type="match status" value="1"/>
</dbReference>
<dbReference type="FunFam" id="2.60.40.150:FF:000055">
    <property type="entry name" value="Toll-interacting protein-like Protein"/>
    <property type="match status" value="1"/>
</dbReference>
<dbReference type="Gene3D" id="2.60.40.150">
    <property type="entry name" value="C2 domain"/>
    <property type="match status" value="1"/>
</dbReference>
<dbReference type="Gene3D" id="1.10.8.10">
    <property type="entry name" value="DNA helicase RuvA subunit, C-terminal domain"/>
    <property type="match status" value="1"/>
</dbReference>
<dbReference type="InterPro" id="IPR000008">
    <property type="entry name" value="C2_dom"/>
</dbReference>
<dbReference type="InterPro" id="IPR035892">
    <property type="entry name" value="C2_domain_sf"/>
</dbReference>
<dbReference type="InterPro" id="IPR003892">
    <property type="entry name" value="CUE"/>
</dbReference>
<dbReference type="InterPro" id="IPR041799">
    <property type="entry name" value="TOLIP_CUE"/>
</dbReference>
<dbReference type="InterPro" id="IPR037301">
    <property type="entry name" value="Tollip_C2"/>
</dbReference>
<dbReference type="InterPro" id="IPR009060">
    <property type="entry name" value="UBA-like_sf"/>
</dbReference>
<dbReference type="PANTHER" id="PTHR16461">
    <property type="entry name" value="TOLL-INTERACTING PROTEIN"/>
    <property type="match status" value="1"/>
</dbReference>
<dbReference type="PANTHER" id="PTHR16461:SF5">
    <property type="entry name" value="TOLL-INTERACTING PROTEIN"/>
    <property type="match status" value="1"/>
</dbReference>
<dbReference type="Pfam" id="PF00168">
    <property type="entry name" value="C2"/>
    <property type="match status" value="1"/>
</dbReference>
<dbReference type="Pfam" id="PF02845">
    <property type="entry name" value="CUE"/>
    <property type="match status" value="1"/>
</dbReference>
<dbReference type="SMART" id="SM00239">
    <property type="entry name" value="C2"/>
    <property type="match status" value="1"/>
</dbReference>
<dbReference type="SMART" id="SM00546">
    <property type="entry name" value="CUE"/>
    <property type="match status" value="1"/>
</dbReference>
<dbReference type="SUPFAM" id="SSF49562">
    <property type="entry name" value="C2 domain (Calcium/lipid-binding domain, CaLB)"/>
    <property type="match status" value="1"/>
</dbReference>
<dbReference type="SUPFAM" id="SSF46934">
    <property type="entry name" value="UBA-like"/>
    <property type="match status" value="1"/>
</dbReference>
<dbReference type="PROSITE" id="PS50004">
    <property type="entry name" value="C2"/>
    <property type="match status" value="1"/>
</dbReference>
<dbReference type="PROSITE" id="PS51140">
    <property type="entry name" value="CUE"/>
    <property type="match status" value="1"/>
</dbReference>
<name>TOLIP_CHICK</name>
<reference key="1">
    <citation type="journal article" date="2005" name="Genome Biol.">
        <title>Full-length cDNAs from chicken bursal lymphocytes to facilitate gene function analysis.</title>
        <authorList>
            <person name="Caldwell R.B."/>
            <person name="Kierzek A.M."/>
            <person name="Arakawa H."/>
            <person name="Bezzubov Y."/>
            <person name="Zaim J."/>
            <person name="Fiedler P."/>
            <person name="Kutter S."/>
            <person name="Blagodatski A."/>
            <person name="Kostovska D."/>
            <person name="Koter M."/>
            <person name="Plachy J."/>
            <person name="Carninci P."/>
            <person name="Hayashizaki Y."/>
            <person name="Buerstedde J.-M."/>
        </authorList>
    </citation>
    <scope>NUCLEOTIDE SEQUENCE [LARGE SCALE MRNA]</scope>
    <source>
        <strain>CB</strain>
        <tissue>Bursa of Fabricius</tissue>
    </source>
</reference>
<keyword id="KW-0072">Autophagy</keyword>
<keyword id="KW-0963">Cytoplasm</keyword>
<keyword id="KW-0967">Endosome</keyword>
<keyword id="KW-0391">Immunity</keyword>
<keyword id="KW-0395">Inflammatory response</keyword>
<keyword id="KW-0399">Innate immunity</keyword>
<keyword id="KW-1185">Reference proteome</keyword>
<keyword id="KW-0677">Repeat</keyword>
<protein>
    <recommendedName>
        <fullName>Toll-interacting protein</fullName>
    </recommendedName>
</protein>
<sequence length="274" mass="30540">MATTVSTQRGPVYVGELPQDFLRITPTQQQQQIQLDAQAAQQLQYGGPMSTVGRLSITVVQAKLAKNYGMTRMDPYCRIRLGYAVYETPTAHNGAKNPRWNKVIQCTVPPGVDSFYLEIFDERAFSMDDRIAWTHITIPESLKQGNVEDEWYSLSGRQGDDKEGMINLVMSYTSLPAAMMMQPQPVVLMPTVYQQGVGYVPIAGMPAVCNPDMVPVAIPPPAVNPQHLCNEEDLKSIQDMFPNMDREVIRSVLEAQRGNKNAAINSLLQMTEES</sequence>
<accession>Q5ZK05</accession>